<keyword id="KW-0028">Amino-acid biosynthesis</keyword>
<keyword id="KW-0057">Aromatic amino acid biosynthesis</keyword>
<keyword id="KW-0328">Glycosyltransferase</keyword>
<keyword id="KW-0460">Magnesium</keyword>
<keyword id="KW-0479">Metal-binding</keyword>
<keyword id="KW-1185">Reference proteome</keyword>
<keyword id="KW-0808">Transferase</keyword>
<keyword id="KW-0822">Tryptophan biosynthesis</keyword>
<sequence>MDMQQAIRAVTQRIDLSEQEMTAVMGLIMNGEATPAQMGGFLVGLAMKGETVDEVTAAARVMRDLATRVEVQAGHLVDTCGTGGDASGSFNISTASALVVAAAGGRVAKHGNRSVSSKSGSADVLEAAGVNLDLSPEQVARCIEQVGVGFLFAPKHHGAMKHAVGPRREMGVRTLFNVLGPLTNPAGAPNQVLGVFSNRWLEPLARVLGRLGSRHVMVVHAEDGLDEISIGAPTRVAELRDGEVTVRLIAPEDFGMERADLSRIRVEDAAGSLAMIRGVLDGQPGPARDIVLLNAGAALYVADVAGSHAEGIEMAREAINSGAAAEKLQQLVSFTASC</sequence>
<comment type="function">
    <text evidence="1">Catalyzes the transfer of the phosphoribosyl group of 5-phosphorylribose-1-pyrophosphate (PRPP) to anthranilate to yield N-(5'-phosphoribosyl)-anthranilate (PRA).</text>
</comment>
<comment type="catalytic activity">
    <reaction evidence="1">
        <text>N-(5-phospho-beta-D-ribosyl)anthranilate + diphosphate = 5-phospho-alpha-D-ribose 1-diphosphate + anthranilate</text>
        <dbReference type="Rhea" id="RHEA:11768"/>
        <dbReference type="ChEBI" id="CHEBI:16567"/>
        <dbReference type="ChEBI" id="CHEBI:18277"/>
        <dbReference type="ChEBI" id="CHEBI:33019"/>
        <dbReference type="ChEBI" id="CHEBI:58017"/>
        <dbReference type="EC" id="2.4.2.18"/>
    </reaction>
</comment>
<comment type="cofactor">
    <cofactor evidence="1">
        <name>Mg(2+)</name>
        <dbReference type="ChEBI" id="CHEBI:18420"/>
    </cofactor>
    <text evidence="1">Binds 2 magnesium ions per monomer.</text>
</comment>
<comment type="pathway">
    <text evidence="1">Amino-acid biosynthesis; L-tryptophan biosynthesis; L-tryptophan from chorismate: step 2/5.</text>
</comment>
<comment type="subunit">
    <text evidence="1">Homodimer.</text>
</comment>
<comment type="similarity">
    <text evidence="1">Belongs to the anthranilate phosphoribosyltransferase family.</text>
</comment>
<feature type="chain" id="PRO_1000198846" description="Anthranilate phosphoribosyltransferase">
    <location>
        <begin position="1"/>
        <end position="338"/>
    </location>
</feature>
<feature type="binding site" evidence="1">
    <location>
        <position position="81"/>
    </location>
    <ligand>
        <name>5-phospho-alpha-D-ribose 1-diphosphate</name>
        <dbReference type="ChEBI" id="CHEBI:58017"/>
    </ligand>
</feature>
<feature type="binding site" evidence="1">
    <location>
        <position position="81"/>
    </location>
    <ligand>
        <name>anthranilate</name>
        <dbReference type="ChEBI" id="CHEBI:16567"/>
        <label>1</label>
    </ligand>
</feature>
<feature type="binding site" evidence="1">
    <location>
        <begin position="84"/>
        <end position="85"/>
    </location>
    <ligand>
        <name>5-phospho-alpha-D-ribose 1-diphosphate</name>
        <dbReference type="ChEBI" id="CHEBI:58017"/>
    </ligand>
</feature>
<feature type="binding site" evidence="1">
    <location>
        <position position="89"/>
    </location>
    <ligand>
        <name>5-phospho-alpha-D-ribose 1-diphosphate</name>
        <dbReference type="ChEBI" id="CHEBI:58017"/>
    </ligand>
</feature>
<feature type="binding site" evidence="1">
    <location>
        <begin position="91"/>
        <end position="94"/>
    </location>
    <ligand>
        <name>5-phospho-alpha-D-ribose 1-diphosphate</name>
        <dbReference type="ChEBI" id="CHEBI:58017"/>
    </ligand>
</feature>
<feature type="binding site" evidence="1">
    <location>
        <position position="93"/>
    </location>
    <ligand>
        <name>Mg(2+)</name>
        <dbReference type="ChEBI" id="CHEBI:18420"/>
        <label>1</label>
    </ligand>
</feature>
<feature type="binding site" evidence="1">
    <location>
        <begin position="109"/>
        <end position="117"/>
    </location>
    <ligand>
        <name>5-phospho-alpha-D-ribose 1-diphosphate</name>
        <dbReference type="ChEBI" id="CHEBI:58017"/>
    </ligand>
</feature>
<feature type="binding site" evidence="1">
    <location>
        <position position="112"/>
    </location>
    <ligand>
        <name>anthranilate</name>
        <dbReference type="ChEBI" id="CHEBI:16567"/>
        <label>1</label>
    </ligand>
</feature>
<feature type="binding site" evidence="1">
    <location>
        <position position="121"/>
    </location>
    <ligand>
        <name>5-phospho-alpha-D-ribose 1-diphosphate</name>
        <dbReference type="ChEBI" id="CHEBI:58017"/>
    </ligand>
</feature>
<feature type="binding site" evidence="1">
    <location>
        <position position="167"/>
    </location>
    <ligand>
        <name>anthranilate</name>
        <dbReference type="ChEBI" id="CHEBI:16567"/>
        <label>2</label>
    </ligand>
</feature>
<feature type="binding site" evidence="1">
    <location>
        <position position="226"/>
    </location>
    <ligand>
        <name>Mg(2+)</name>
        <dbReference type="ChEBI" id="CHEBI:18420"/>
        <label>2</label>
    </ligand>
</feature>
<feature type="binding site" evidence="1">
    <location>
        <position position="227"/>
    </location>
    <ligand>
        <name>Mg(2+)</name>
        <dbReference type="ChEBI" id="CHEBI:18420"/>
        <label>1</label>
    </ligand>
</feature>
<feature type="binding site" evidence="1">
    <location>
        <position position="227"/>
    </location>
    <ligand>
        <name>Mg(2+)</name>
        <dbReference type="ChEBI" id="CHEBI:18420"/>
        <label>2</label>
    </ligand>
</feature>
<protein>
    <recommendedName>
        <fullName evidence="1">Anthranilate phosphoribosyltransferase</fullName>
        <ecNumber evidence="1">2.4.2.18</ecNumber>
    </recommendedName>
</protein>
<proteinExistence type="inferred from homology"/>
<evidence type="ECO:0000255" key="1">
    <source>
        <dbReference type="HAMAP-Rule" id="MF_00211"/>
    </source>
</evidence>
<name>TRPD_THISH</name>
<accession>B8GNI1</accession>
<reference key="1">
    <citation type="journal article" date="2011" name="Stand. Genomic Sci.">
        <title>Complete genome sequence of 'Thioalkalivibrio sulfidophilus' HL-EbGr7.</title>
        <authorList>
            <person name="Muyzer G."/>
            <person name="Sorokin D.Y."/>
            <person name="Mavromatis K."/>
            <person name="Lapidus A."/>
            <person name="Clum A."/>
            <person name="Ivanova N."/>
            <person name="Pati A."/>
            <person name="d'Haeseleer P."/>
            <person name="Woyke T."/>
            <person name="Kyrpides N.C."/>
        </authorList>
    </citation>
    <scope>NUCLEOTIDE SEQUENCE [LARGE SCALE GENOMIC DNA]</scope>
    <source>
        <strain>HL-EbGR7</strain>
    </source>
</reference>
<dbReference type="EC" id="2.4.2.18" evidence="1"/>
<dbReference type="EMBL" id="CP001339">
    <property type="protein sequence ID" value="ACL73872.1"/>
    <property type="molecule type" value="Genomic_DNA"/>
</dbReference>
<dbReference type="RefSeq" id="WP_012639347.1">
    <property type="nucleotide sequence ID" value="NC_011901.1"/>
</dbReference>
<dbReference type="SMR" id="B8GNI1"/>
<dbReference type="STRING" id="396588.Tgr7_2799"/>
<dbReference type="KEGG" id="tgr:Tgr7_2799"/>
<dbReference type="eggNOG" id="COG0547">
    <property type="taxonomic scope" value="Bacteria"/>
</dbReference>
<dbReference type="HOGENOM" id="CLU_034315_2_1_6"/>
<dbReference type="OrthoDB" id="9806430at2"/>
<dbReference type="UniPathway" id="UPA00035">
    <property type="reaction ID" value="UER00041"/>
</dbReference>
<dbReference type="Proteomes" id="UP000002383">
    <property type="component" value="Chromosome"/>
</dbReference>
<dbReference type="GO" id="GO:0005829">
    <property type="term" value="C:cytosol"/>
    <property type="evidence" value="ECO:0007669"/>
    <property type="project" value="TreeGrafter"/>
</dbReference>
<dbReference type="GO" id="GO:0004048">
    <property type="term" value="F:anthranilate phosphoribosyltransferase activity"/>
    <property type="evidence" value="ECO:0007669"/>
    <property type="project" value="UniProtKB-UniRule"/>
</dbReference>
<dbReference type="GO" id="GO:0000287">
    <property type="term" value="F:magnesium ion binding"/>
    <property type="evidence" value="ECO:0007669"/>
    <property type="project" value="UniProtKB-UniRule"/>
</dbReference>
<dbReference type="GO" id="GO:0000162">
    <property type="term" value="P:L-tryptophan biosynthetic process"/>
    <property type="evidence" value="ECO:0007669"/>
    <property type="project" value="UniProtKB-UniRule"/>
</dbReference>
<dbReference type="FunFam" id="3.40.1030.10:FF:000002">
    <property type="entry name" value="Anthranilate phosphoribosyltransferase"/>
    <property type="match status" value="1"/>
</dbReference>
<dbReference type="Gene3D" id="3.40.1030.10">
    <property type="entry name" value="Nucleoside phosphorylase/phosphoribosyltransferase catalytic domain"/>
    <property type="match status" value="1"/>
</dbReference>
<dbReference type="Gene3D" id="1.20.970.10">
    <property type="entry name" value="Transferase, Pyrimidine Nucleoside Phosphorylase, Chain C"/>
    <property type="match status" value="1"/>
</dbReference>
<dbReference type="HAMAP" id="MF_00211">
    <property type="entry name" value="TrpD"/>
    <property type="match status" value="1"/>
</dbReference>
<dbReference type="InterPro" id="IPR005940">
    <property type="entry name" value="Anthranilate_Pribosyl_Tfrase"/>
</dbReference>
<dbReference type="InterPro" id="IPR000312">
    <property type="entry name" value="Glycosyl_Trfase_fam3"/>
</dbReference>
<dbReference type="InterPro" id="IPR017459">
    <property type="entry name" value="Glycosyl_Trfase_fam3_N_dom"/>
</dbReference>
<dbReference type="InterPro" id="IPR036320">
    <property type="entry name" value="Glycosyl_Trfase_fam3_N_dom_sf"/>
</dbReference>
<dbReference type="InterPro" id="IPR035902">
    <property type="entry name" value="Nuc_phospho_transferase"/>
</dbReference>
<dbReference type="NCBIfam" id="TIGR01245">
    <property type="entry name" value="trpD"/>
    <property type="match status" value="1"/>
</dbReference>
<dbReference type="PANTHER" id="PTHR43285">
    <property type="entry name" value="ANTHRANILATE PHOSPHORIBOSYLTRANSFERASE"/>
    <property type="match status" value="1"/>
</dbReference>
<dbReference type="PANTHER" id="PTHR43285:SF2">
    <property type="entry name" value="ANTHRANILATE PHOSPHORIBOSYLTRANSFERASE"/>
    <property type="match status" value="1"/>
</dbReference>
<dbReference type="Pfam" id="PF02885">
    <property type="entry name" value="Glycos_trans_3N"/>
    <property type="match status" value="1"/>
</dbReference>
<dbReference type="Pfam" id="PF00591">
    <property type="entry name" value="Glycos_transf_3"/>
    <property type="match status" value="1"/>
</dbReference>
<dbReference type="SUPFAM" id="SSF52418">
    <property type="entry name" value="Nucleoside phosphorylase/phosphoribosyltransferase catalytic domain"/>
    <property type="match status" value="1"/>
</dbReference>
<dbReference type="SUPFAM" id="SSF47648">
    <property type="entry name" value="Nucleoside phosphorylase/phosphoribosyltransferase N-terminal domain"/>
    <property type="match status" value="1"/>
</dbReference>
<gene>
    <name evidence="1" type="primary">trpD</name>
    <name type="ordered locus">Tgr7_2799</name>
</gene>
<organism>
    <name type="scientific">Thioalkalivibrio sulfidiphilus (strain HL-EbGR7)</name>
    <dbReference type="NCBI Taxonomy" id="396588"/>
    <lineage>
        <taxon>Bacteria</taxon>
        <taxon>Pseudomonadati</taxon>
        <taxon>Pseudomonadota</taxon>
        <taxon>Gammaproteobacteria</taxon>
        <taxon>Chromatiales</taxon>
        <taxon>Ectothiorhodospiraceae</taxon>
        <taxon>Thioalkalivibrio</taxon>
    </lineage>
</organism>